<comment type="function">
    <text evidence="1">Cell wall formation. Catalyzes the transfer of a GlcNAc subunit on undecaprenyl-pyrophosphoryl-MurNAc-pentapeptide (lipid intermediate I) to form undecaprenyl-pyrophosphoryl-MurNAc-(pentapeptide)GlcNAc (lipid intermediate II).</text>
</comment>
<comment type="catalytic activity">
    <reaction evidence="1">
        <text>di-trans,octa-cis-undecaprenyl diphospho-N-acetyl-alpha-D-muramoyl-L-alanyl-D-glutamyl-meso-2,6-diaminopimeloyl-D-alanyl-D-alanine + UDP-N-acetyl-alpha-D-glucosamine = di-trans,octa-cis-undecaprenyl diphospho-[N-acetyl-alpha-D-glucosaminyl-(1-&gt;4)]-N-acetyl-alpha-D-muramoyl-L-alanyl-D-glutamyl-meso-2,6-diaminopimeloyl-D-alanyl-D-alanine + UDP + H(+)</text>
        <dbReference type="Rhea" id="RHEA:31227"/>
        <dbReference type="ChEBI" id="CHEBI:15378"/>
        <dbReference type="ChEBI" id="CHEBI:57705"/>
        <dbReference type="ChEBI" id="CHEBI:58223"/>
        <dbReference type="ChEBI" id="CHEBI:61387"/>
        <dbReference type="ChEBI" id="CHEBI:61388"/>
        <dbReference type="EC" id="2.4.1.227"/>
    </reaction>
</comment>
<comment type="pathway">
    <text evidence="1">Cell wall biogenesis; peptidoglycan biosynthesis.</text>
</comment>
<comment type="subcellular location">
    <subcellularLocation>
        <location evidence="1">Cell inner membrane</location>
        <topology evidence="1">Peripheral membrane protein</topology>
        <orientation evidence="1">Cytoplasmic side</orientation>
    </subcellularLocation>
</comment>
<comment type="similarity">
    <text evidence="1">Belongs to the glycosyltransferase 28 family. MurG subfamily.</text>
</comment>
<evidence type="ECO:0000255" key="1">
    <source>
        <dbReference type="HAMAP-Rule" id="MF_00033"/>
    </source>
</evidence>
<feature type="chain" id="PRO_1000090438" description="UDP-N-acetylglucosamine--N-acetylmuramyl-(pentapeptide) pyrophosphoryl-undecaprenol N-acetylglucosamine transferase">
    <location>
        <begin position="1"/>
        <end position="353"/>
    </location>
</feature>
<feature type="binding site" evidence="1">
    <location>
        <begin position="10"/>
        <end position="12"/>
    </location>
    <ligand>
        <name>UDP-N-acetyl-alpha-D-glucosamine</name>
        <dbReference type="ChEBI" id="CHEBI:57705"/>
    </ligand>
</feature>
<feature type="binding site" evidence="1">
    <location>
        <position position="124"/>
    </location>
    <ligand>
        <name>UDP-N-acetyl-alpha-D-glucosamine</name>
        <dbReference type="ChEBI" id="CHEBI:57705"/>
    </ligand>
</feature>
<feature type="binding site" evidence="1">
    <location>
        <position position="183"/>
    </location>
    <ligand>
        <name>UDP-N-acetyl-alpha-D-glucosamine</name>
        <dbReference type="ChEBI" id="CHEBI:57705"/>
    </ligand>
</feature>
<feature type="binding site" evidence="1">
    <location>
        <position position="283"/>
    </location>
    <ligand>
        <name>UDP-N-acetyl-alpha-D-glucosamine</name>
        <dbReference type="ChEBI" id="CHEBI:57705"/>
    </ligand>
</feature>
<keyword id="KW-0131">Cell cycle</keyword>
<keyword id="KW-0132">Cell division</keyword>
<keyword id="KW-0997">Cell inner membrane</keyword>
<keyword id="KW-1003">Cell membrane</keyword>
<keyword id="KW-0133">Cell shape</keyword>
<keyword id="KW-0961">Cell wall biogenesis/degradation</keyword>
<keyword id="KW-0328">Glycosyltransferase</keyword>
<keyword id="KW-0472">Membrane</keyword>
<keyword id="KW-0573">Peptidoglycan synthesis</keyword>
<keyword id="KW-0808">Transferase</keyword>
<reference key="1">
    <citation type="submission" date="2008-10" db="EMBL/GenBank/DDBJ databases">
        <title>The complete genome sequence of Helicobacter pylori strain P12.</title>
        <authorList>
            <person name="Fischer W."/>
            <person name="Windhager L."/>
            <person name="Karnholz A."/>
            <person name="Zeiller M."/>
            <person name="Zimmer R."/>
            <person name="Haas R."/>
        </authorList>
    </citation>
    <scope>NUCLEOTIDE SEQUENCE [LARGE SCALE GENOMIC DNA]</scope>
    <source>
        <strain>P12</strain>
    </source>
</reference>
<protein>
    <recommendedName>
        <fullName evidence="1">UDP-N-acetylglucosamine--N-acetylmuramyl-(pentapeptide) pyrophosphoryl-undecaprenol N-acetylglucosamine transferase</fullName>
        <ecNumber evidence="1">2.4.1.227</ecNumber>
    </recommendedName>
    <alternativeName>
        <fullName evidence="1">Undecaprenyl-PP-MurNAc-pentapeptide-UDPGlcNAc GlcNAc transferase</fullName>
    </alternativeName>
</protein>
<gene>
    <name evidence="1" type="primary">murG</name>
    <name type="ordered locus">HPP12_1121</name>
</gene>
<dbReference type="EC" id="2.4.1.227" evidence="1"/>
<dbReference type="EMBL" id="CP001217">
    <property type="protein sequence ID" value="ACJ08273.1"/>
    <property type="molecule type" value="Genomic_DNA"/>
</dbReference>
<dbReference type="SMR" id="B6JMZ5"/>
<dbReference type="CAZy" id="GT28">
    <property type="family name" value="Glycosyltransferase Family 28"/>
</dbReference>
<dbReference type="KEGG" id="hpp:HPP12_1121"/>
<dbReference type="HOGENOM" id="CLU_037404_2_1_7"/>
<dbReference type="UniPathway" id="UPA00219"/>
<dbReference type="Proteomes" id="UP000008198">
    <property type="component" value="Chromosome"/>
</dbReference>
<dbReference type="GO" id="GO:0005886">
    <property type="term" value="C:plasma membrane"/>
    <property type="evidence" value="ECO:0007669"/>
    <property type="project" value="UniProtKB-SubCell"/>
</dbReference>
<dbReference type="GO" id="GO:0051991">
    <property type="term" value="F:UDP-N-acetyl-D-glucosamine:N-acetylmuramoyl-L-alanyl-D-glutamyl-meso-2,6-diaminopimelyl-D-alanyl-D-alanine-diphosphoundecaprenol 4-beta-N-acetylglucosaminlytransferase activity"/>
    <property type="evidence" value="ECO:0007669"/>
    <property type="project" value="RHEA"/>
</dbReference>
<dbReference type="GO" id="GO:0050511">
    <property type="term" value="F:undecaprenyldiphospho-muramoylpentapeptide beta-N-acetylglucosaminyltransferase activity"/>
    <property type="evidence" value="ECO:0007669"/>
    <property type="project" value="UniProtKB-UniRule"/>
</dbReference>
<dbReference type="GO" id="GO:0005975">
    <property type="term" value="P:carbohydrate metabolic process"/>
    <property type="evidence" value="ECO:0007669"/>
    <property type="project" value="InterPro"/>
</dbReference>
<dbReference type="GO" id="GO:0051301">
    <property type="term" value="P:cell division"/>
    <property type="evidence" value="ECO:0007669"/>
    <property type="project" value="UniProtKB-KW"/>
</dbReference>
<dbReference type="GO" id="GO:0071555">
    <property type="term" value="P:cell wall organization"/>
    <property type="evidence" value="ECO:0007669"/>
    <property type="project" value="UniProtKB-KW"/>
</dbReference>
<dbReference type="GO" id="GO:0030259">
    <property type="term" value="P:lipid glycosylation"/>
    <property type="evidence" value="ECO:0007669"/>
    <property type="project" value="UniProtKB-UniRule"/>
</dbReference>
<dbReference type="GO" id="GO:0009252">
    <property type="term" value="P:peptidoglycan biosynthetic process"/>
    <property type="evidence" value="ECO:0007669"/>
    <property type="project" value="UniProtKB-UniRule"/>
</dbReference>
<dbReference type="GO" id="GO:0008360">
    <property type="term" value="P:regulation of cell shape"/>
    <property type="evidence" value="ECO:0007669"/>
    <property type="project" value="UniProtKB-KW"/>
</dbReference>
<dbReference type="CDD" id="cd03785">
    <property type="entry name" value="GT28_MurG"/>
    <property type="match status" value="1"/>
</dbReference>
<dbReference type="Gene3D" id="3.40.50.2000">
    <property type="entry name" value="Glycogen Phosphorylase B"/>
    <property type="match status" value="2"/>
</dbReference>
<dbReference type="HAMAP" id="MF_00033">
    <property type="entry name" value="MurG"/>
    <property type="match status" value="1"/>
</dbReference>
<dbReference type="InterPro" id="IPR006009">
    <property type="entry name" value="GlcNAc_MurG"/>
</dbReference>
<dbReference type="InterPro" id="IPR007235">
    <property type="entry name" value="Glyco_trans_28_C"/>
</dbReference>
<dbReference type="InterPro" id="IPR004276">
    <property type="entry name" value="GlycoTrans_28_N"/>
</dbReference>
<dbReference type="NCBIfam" id="TIGR01133">
    <property type="entry name" value="murG"/>
    <property type="match status" value="1"/>
</dbReference>
<dbReference type="PANTHER" id="PTHR21015:SF22">
    <property type="entry name" value="GLYCOSYLTRANSFERASE"/>
    <property type="match status" value="1"/>
</dbReference>
<dbReference type="PANTHER" id="PTHR21015">
    <property type="entry name" value="UDP-N-ACETYLGLUCOSAMINE--N-ACETYLMURAMYL-(PENTAPEPTIDE) PYROPHOSPHORYL-UNDECAPRENOL N-ACETYLGLUCOSAMINE TRANSFERASE 1"/>
    <property type="match status" value="1"/>
</dbReference>
<dbReference type="Pfam" id="PF04101">
    <property type="entry name" value="Glyco_tran_28_C"/>
    <property type="match status" value="1"/>
</dbReference>
<dbReference type="Pfam" id="PF03033">
    <property type="entry name" value="Glyco_transf_28"/>
    <property type="match status" value="1"/>
</dbReference>
<dbReference type="SUPFAM" id="SSF53756">
    <property type="entry name" value="UDP-Glycosyltransferase/glycogen phosphorylase"/>
    <property type="match status" value="1"/>
</dbReference>
<sequence>MKFALTGGGTGGHLSIAKALAIELEKQGVEAIYLGSTYGQDKEWFENSPLFSERYFFNTQGVVNKSFFKKINSLFLQVKAAFKAKEILKKHQITHTISVGGFSAGPASFASLLNHIPLYIHEQNAIKGSLNRYLSPKAKAVFSSYAFKDKGNHVLTSYPVQNAFFDYARTRAEIKHILFLGGSQGAKAINEFALLNAPKLTKQGIKITHICGSDAHEKMRFFYQELGLLDKIELFAFHNNIIEVMRRADLCVSRAGASSVWELCANGLPTIFIPYPFASNNHQYYNVLEFEKENLCYVVPQNELLPKKLFEVIRKLNQKDDQGNKNLTIISAKLQQKIAKDGAKTIIETILSA</sequence>
<name>MURG_HELP2</name>
<accession>B6JMZ5</accession>
<organism>
    <name type="scientific">Helicobacter pylori (strain P12)</name>
    <dbReference type="NCBI Taxonomy" id="570508"/>
    <lineage>
        <taxon>Bacteria</taxon>
        <taxon>Pseudomonadati</taxon>
        <taxon>Campylobacterota</taxon>
        <taxon>Epsilonproteobacteria</taxon>
        <taxon>Campylobacterales</taxon>
        <taxon>Helicobacteraceae</taxon>
        <taxon>Helicobacter</taxon>
    </lineage>
</organism>
<proteinExistence type="inferred from homology"/>